<feature type="chain" id="PRO_0000152241" description="Glutamine-dependent NAD(+) synthetase">
    <location>
        <begin position="1"/>
        <end position="679"/>
    </location>
</feature>
<feature type="domain" description="CN hydrolase" evidence="2">
    <location>
        <begin position="12"/>
        <end position="276"/>
    </location>
</feature>
<feature type="region of interest" description="Ligase">
    <location>
        <begin position="337"/>
        <end position="679"/>
    </location>
</feature>
<feature type="region of interest" description="Disordered" evidence="3">
    <location>
        <begin position="639"/>
        <end position="658"/>
    </location>
</feature>
<feature type="active site" description="Proton acceptor; for glutaminase activity" evidence="1 11 12">
    <location>
        <position position="52"/>
    </location>
</feature>
<feature type="active site" description="For glutaminase activity" evidence="1 11 12">
    <location>
        <position position="121"/>
    </location>
</feature>
<feature type="active site" description="Nucleophile; for glutaminase activity" evidence="1 11 12">
    <location>
        <position position="176"/>
    </location>
</feature>
<feature type="binding site" evidence="1 17">
    <location>
        <position position="127"/>
    </location>
    <ligand>
        <name>L-glutamine</name>
        <dbReference type="ChEBI" id="CHEBI:58359"/>
    </ligand>
</feature>
<feature type="binding site" evidence="1 17">
    <location>
        <position position="203"/>
    </location>
    <ligand>
        <name>L-glutamine</name>
        <dbReference type="ChEBI" id="CHEBI:58359"/>
    </ligand>
</feature>
<feature type="binding site" evidence="1 17">
    <location>
        <position position="209"/>
    </location>
    <ligand>
        <name>L-glutamine</name>
        <dbReference type="ChEBI" id="CHEBI:58359"/>
    </ligand>
</feature>
<feature type="binding site" evidence="13 15 16 17 18">
    <location>
        <position position="354"/>
    </location>
    <ligand>
        <name>deamido-NAD(+)</name>
        <dbReference type="ChEBI" id="CHEBI:58437"/>
        <note>ligand shared between two neighboring subunits</note>
    </ligand>
</feature>
<feature type="binding site" evidence="1 15 16 17 18">
    <location>
        <begin position="366"/>
        <end position="373"/>
    </location>
    <ligand>
        <name>ATP</name>
        <dbReference type="ChEBI" id="CHEBI:30616"/>
    </ligand>
</feature>
<feature type="binding site" description="in other chain" evidence="1 13 15 16 18">
    <location>
        <position position="456"/>
    </location>
    <ligand>
        <name>deamido-NAD(+)</name>
        <dbReference type="ChEBI" id="CHEBI:58437"/>
        <note>ligand shared between two neighboring subunits</note>
    </ligand>
</feature>
<feature type="binding site" evidence="13 15 16 17 18">
    <location>
        <position position="471"/>
    </location>
    <ligand>
        <name>deamido-NAD(+)</name>
        <dbReference type="ChEBI" id="CHEBI:58437"/>
        <note>ligand shared between two neighboring subunits</note>
    </ligand>
</feature>
<feature type="binding site" evidence="13 15 16 17 18">
    <location>
        <position position="475"/>
    </location>
    <ligand>
        <name>deamido-NAD(+)</name>
        <dbReference type="ChEBI" id="CHEBI:58437"/>
        <note>ligand shared between two neighboring subunits</note>
    </ligand>
</feature>
<feature type="binding site" evidence="1 15 17 18">
    <location>
        <position position="480"/>
    </location>
    <ligand>
        <name>ATP</name>
        <dbReference type="ChEBI" id="CHEBI:30616"/>
    </ligand>
</feature>
<feature type="binding site" description="in other chain" evidence="1 15 16 17">
    <location>
        <position position="485"/>
    </location>
    <ligand>
        <name>deamido-NAD(+)</name>
        <dbReference type="ChEBI" id="CHEBI:58437"/>
        <note>ligand shared between two neighboring subunits</note>
    </ligand>
</feature>
<feature type="binding site" description="in other chain" evidence="1 13 15 16 17 18">
    <location>
        <begin position="490"/>
        <end position="493"/>
    </location>
    <ligand>
        <name>deamido-NAD(+)</name>
        <dbReference type="ChEBI" id="CHEBI:58437"/>
        <note>ligand shared between two neighboring subunits</note>
    </ligand>
</feature>
<feature type="binding site" evidence="13 15 16 17 18">
    <location>
        <position position="501"/>
    </location>
    <ligand>
        <name>deamido-NAD(+)</name>
        <dbReference type="ChEBI" id="CHEBI:58437"/>
        <note>ligand shared between two neighboring subunits</note>
    </ligand>
</feature>
<feature type="binding site" description="in other chain" evidence="1 13 15 16 17 18">
    <location>
        <position position="635"/>
    </location>
    <ligand>
        <name>deamido-NAD(+)</name>
        <dbReference type="ChEBI" id="CHEBI:58437"/>
        <note>ligand shared between two neighboring subunits</note>
    </ligand>
</feature>
<feature type="binding site" description="in other chain" evidence="13 18">
    <location>
        <position position="661"/>
    </location>
    <ligand>
        <name>deamido-NAD(+)</name>
        <dbReference type="ChEBI" id="CHEBI:58437"/>
        <note>ligand shared between two neighboring subunits</note>
    </ligand>
</feature>
<feature type="mutagenesis site" description="Lack of glutamine-dependent activity. Retains 30% of ammonia-dependent activity." evidence="4">
    <original>E</original>
    <variation>A</variation>
    <location>
        <position position="52"/>
    </location>
</feature>
<feature type="mutagenesis site" description="Lack of glutamine-dependent and ammonia-dependent activities." evidence="4">
    <original>K</original>
    <variation>A</variation>
    <location>
        <position position="121"/>
    </location>
</feature>
<feature type="mutagenesis site" description="Lack of glutamine-dependent activity. Retains 90% of ammonia-dependent activity." evidence="4">
    <original>C</original>
    <variation>A</variation>
    <location>
        <position position="176"/>
    </location>
</feature>
<feature type="mutagenesis site" description="Causes a decrease in ammonia channel efficiency to 70% compared with wild-type enzyme." evidence="5">
    <original>D</original>
    <variation>A</variation>
    <location>
        <position position="656"/>
    </location>
</feature>
<feature type="helix" evidence="19">
    <location>
        <begin position="7"/>
        <end position="9"/>
    </location>
</feature>
<feature type="strand" evidence="19">
    <location>
        <begin position="11"/>
        <end position="18"/>
    </location>
</feature>
<feature type="helix" evidence="19">
    <location>
        <begin position="26"/>
        <end position="42"/>
    </location>
</feature>
<feature type="strand" evidence="19">
    <location>
        <begin position="46"/>
        <end position="49"/>
    </location>
</feature>
<feature type="turn" evidence="19">
    <location>
        <begin position="52"/>
        <end position="56"/>
    </location>
</feature>
<feature type="helix" evidence="19">
    <location>
        <begin position="58"/>
        <end position="65"/>
    </location>
</feature>
<feature type="helix" evidence="19">
    <location>
        <begin position="67"/>
        <end position="84"/>
    </location>
</feature>
<feature type="strand" evidence="19">
    <location>
        <begin position="88"/>
        <end position="99"/>
    </location>
</feature>
<feature type="strand" evidence="19">
    <location>
        <begin position="102"/>
        <end position="111"/>
    </location>
</feature>
<feature type="strand" evidence="19">
    <location>
        <begin position="114"/>
        <end position="120"/>
    </location>
</feature>
<feature type="helix" evidence="19">
    <location>
        <begin position="132"/>
        <end position="134"/>
    </location>
</feature>
<feature type="strand" evidence="19">
    <location>
        <begin position="144"/>
        <end position="148"/>
    </location>
</feature>
<feature type="strand" evidence="19">
    <location>
        <begin position="151"/>
        <end position="157"/>
    </location>
</feature>
<feature type="strand" evidence="19">
    <location>
        <begin position="159"/>
        <end position="163"/>
    </location>
</feature>
<feature type="strand" evidence="19">
    <location>
        <begin position="170"/>
        <end position="175"/>
    </location>
</feature>
<feature type="helix" evidence="19">
    <location>
        <begin position="176"/>
        <end position="180"/>
    </location>
</feature>
<feature type="strand" evidence="19">
    <location>
        <begin position="181"/>
        <end position="183"/>
    </location>
</feature>
<feature type="helix" evidence="19">
    <location>
        <begin position="185"/>
        <end position="192"/>
    </location>
</feature>
<feature type="strand" evidence="19">
    <location>
        <begin position="196"/>
        <end position="200"/>
    </location>
</feature>
<feature type="helix" evidence="19">
    <location>
        <begin position="209"/>
        <end position="223"/>
    </location>
</feature>
<feature type="strand" evidence="19">
    <location>
        <begin position="226"/>
        <end position="231"/>
    </location>
</feature>
<feature type="turn" evidence="23">
    <location>
        <begin position="239"/>
        <end position="241"/>
    </location>
</feature>
<feature type="strand" evidence="19">
    <location>
        <begin position="248"/>
        <end position="252"/>
    </location>
</feature>
<feature type="strand" evidence="19">
    <location>
        <begin position="255"/>
        <end position="259"/>
    </location>
</feature>
<feature type="strand" evidence="19">
    <location>
        <begin position="268"/>
        <end position="275"/>
    </location>
</feature>
<feature type="helix" evidence="19">
    <location>
        <begin position="276"/>
        <end position="285"/>
    </location>
</feature>
<feature type="helix" evidence="19">
    <location>
        <begin position="287"/>
        <end position="295"/>
    </location>
</feature>
<feature type="helix" evidence="19">
    <location>
        <begin position="297"/>
        <end position="301"/>
    </location>
</feature>
<feature type="strand" evidence="19">
    <location>
        <begin position="304"/>
        <end position="308"/>
    </location>
</feature>
<feature type="helix" evidence="19">
    <location>
        <begin position="333"/>
        <end position="357"/>
    </location>
</feature>
<feature type="strand" evidence="19">
    <location>
        <begin position="362"/>
        <end position="366"/>
    </location>
</feature>
<feature type="helix" evidence="19">
    <location>
        <begin position="371"/>
        <end position="386"/>
    </location>
</feature>
<feature type="helix" evidence="19">
    <location>
        <begin position="391"/>
        <end position="393"/>
    </location>
</feature>
<feature type="strand" evidence="19">
    <location>
        <begin position="394"/>
        <end position="398"/>
    </location>
</feature>
<feature type="helix" evidence="19">
    <location>
        <begin position="411"/>
        <end position="419"/>
    </location>
</feature>
<feature type="strand" evidence="19">
    <location>
        <begin position="422"/>
        <end position="425"/>
    </location>
</feature>
<feature type="helix" evidence="19">
    <location>
        <begin position="429"/>
        <end position="438"/>
    </location>
</feature>
<feature type="helix" evidence="22">
    <location>
        <begin position="442"/>
        <end position="445"/>
    </location>
</feature>
<feature type="helix" evidence="19">
    <location>
        <begin position="453"/>
        <end position="473"/>
    </location>
</feature>
<feature type="strand" evidence="19">
    <location>
        <begin position="475"/>
        <end position="479"/>
    </location>
</feature>
<feature type="helix" evidence="19">
    <location>
        <begin position="483"/>
        <end position="488"/>
    </location>
</feature>
<feature type="strand" evidence="19">
    <location>
        <begin position="494"/>
        <end position="496"/>
    </location>
</feature>
<feature type="strand" evidence="19">
    <location>
        <begin position="501"/>
        <end position="503"/>
    </location>
</feature>
<feature type="turn" evidence="19">
    <location>
        <begin position="504"/>
        <end position="507"/>
    </location>
</feature>
<feature type="helix" evidence="19">
    <location>
        <begin position="510"/>
        <end position="523"/>
    </location>
</feature>
<feature type="turn" evidence="20">
    <location>
        <begin position="524"/>
        <end position="526"/>
    </location>
</feature>
<feature type="helix" evidence="19">
    <location>
        <begin position="528"/>
        <end position="542"/>
    </location>
</feature>
<feature type="helix" evidence="19">
    <location>
        <begin position="558"/>
        <end position="561"/>
    </location>
</feature>
<feature type="helix" evidence="19">
    <location>
        <begin position="564"/>
        <end position="577"/>
    </location>
</feature>
<feature type="helix" evidence="19">
    <location>
        <begin position="581"/>
        <end position="592"/>
    </location>
</feature>
<feature type="strand" evidence="21">
    <location>
        <begin position="595"/>
        <end position="598"/>
    </location>
</feature>
<feature type="helix" evidence="19">
    <location>
        <begin position="606"/>
        <end position="608"/>
    </location>
</feature>
<feature type="helix" evidence="19">
    <location>
        <begin position="614"/>
        <end position="629"/>
    </location>
</feature>
<feature type="turn" evidence="23">
    <location>
        <begin position="630"/>
        <end position="632"/>
    </location>
</feature>
<feature type="helix" evidence="19">
    <location>
        <begin position="633"/>
        <end position="636"/>
    </location>
</feature>
<feature type="turn" evidence="19">
    <location>
        <begin position="653"/>
        <end position="656"/>
    </location>
</feature>
<feature type="helix" evidence="19">
    <location>
        <begin position="666"/>
        <end position="675"/>
    </location>
</feature>
<reference key="1">
    <citation type="journal article" date="1998" name="Nature">
        <title>Deciphering the biology of Mycobacterium tuberculosis from the complete genome sequence.</title>
        <authorList>
            <person name="Cole S.T."/>
            <person name="Brosch R."/>
            <person name="Parkhill J."/>
            <person name="Garnier T."/>
            <person name="Churcher C.M."/>
            <person name="Harris D.E."/>
            <person name="Gordon S.V."/>
            <person name="Eiglmeier K."/>
            <person name="Gas S."/>
            <person name="Barry C.E. III"/>
            <person name="Tekaia F."/>
            <person name="Badcock K."/>
            <person name="Basham D."/>
            <person name="Brown D."/>
            <person name="Chillingworth T."/>
            <person name="Connor R."/>
            <person name="Davies R.M."/>
            <person name="Devlin K."/>
            <person name="Feltwell T."/>
            <person name="Gentles S."/>
            <person name="Hamlin N."/>
            <person name="Holroyd S."/>
            <person name="Hornsby T."/>
            <person name="Jagels K."/>
            <person name="Krogh A."/>
            <person name="McLean J."/>
            <person name="Moule S."/>
            <person name="Murphy L.D."/>
            <person name="Oliver S."/>
            <person name="Osborne J."/>
            <person name="Quail M.A."/>
            <person name="Rajandream M.A."/>
            <person name="Rogers J."/>
            <person name="Rutter S."/>
            <person name="Seeger K."/>
            <person name="Skelton S."/>
            <person name="Squares S."/>
            <person name="Squares R."/>
            <person name="Sulston J.E."/>
            <person name="Taylor K."/>
            <person name="Whitehead S."/>
            <person name="Barrell B.G."/>
        </authorList>
    </citation>
    <scope>NUCLEOTIDE SEQUENCE [LARGE SCALE GENOMIC DNA]</scope>
    <source>
        <strain>ATCC 25618 / H37Rv</strain>
    </source>
</reference>
<reference key="2">
    <citation type="journal article" date="1998" name="J. Bacteriol.">
        <title>The MTCY428.08 gene of Mycobacterium tuberculosis codes for NAD+ synthetase.</title>
        <authorList>
            <person name="Cantoni R."/>
            <person name="Branzoni M."/>
            <person name="Labo M."/>
            <person name="Rizzi M."/>
            <person name="Riccardi G."/>
        </authorList>
    </citation>
    <scope>FUNCTION</scope>
    <scope>CATALYTIC ACTIVITY</scope>
</reference>
<reference key="3">
    <citation type="journal article" date="2005" name="Res. Microbiol.">
        <title>Glutamine amidotransferase activity of NAD+ synthetase from Mycobacterium tuberculosis depends on an amino-terminal nitrilase domain.</title>
        <authorList>
            <person name="Bellinzoni M."/>
            <person name="Buroni S."/>
            <person name="Pasca M.R."/>
            <person name="Guglierame P."/>
            <person name="Arcesi F."/>
            <person name="De Rossi E."/>
            <person name="Riccardi G."/>
        </authorList>
    </citation>
    <scope>FUNCTION</scope>
    <scope>CATALYTIC ACTIVITY</scope>
    <scope>MUTAGENESIS OF GLU-52; LYS-121 AND CYS-176</scope>
    <scope>ACTIVE SITE</scope>
</reference>
<reference key="4">
    <citation type="journal article" date="2011" name="Mol. Cell. Proteomics">
        <title>Proteogenomic analysis of Mycobacterium tuberculosis by high resolution mass spectrometry.</title>
        <authorList>
            <person name="Kelkar D.S."/>
            <person name="Kumar D."/>
            <person name="Kumar P."/>
            <person name="Balakrishnan L."/>
            <person name="Muthusamy B."/>
            <person name="Yadav A.K."/>
            <person name="Shrivastava P."/>
            <person name="Marimuthu A."/>
            <person name="Anand S."/>
            <person name="Sundaram H."/>
            <person name="Kingsbury R."/>
            <person name="Harsha H.C."/>
            <person name="Nair B."/>
            <person name="Prasad T.S."/>
            <person name="Chauhan D.S."/>
            <person name="Katoch K."/>
            <person name="Katoch V.M."/>
            <person name="Kumar P."/>
            <person name="Chaerkady R."/>
            <person name="Ramachandran S."/>
            <person name="Dash D."/>
            <person name="Pandey A."/>
        </authorList>
    </citation>
    <scope>IDENTIFICATION BY MASS SPECTROMETRY [LARGE SCALE ANALYSIS]</scope>
    <source>
        <strain>ATCC 25618 / H37Rv</strain>
    </source>
</reference>
<reference evidence="13" key="5">
    <citation type="journal article" date="2009" name="Nat. Struct. Mol. Biol.">
        <title>Regulation of active site coupling in glutamine-dependent NAD(+) synthetase.</title>
        <authorList>
            <person name="LaRonde-LeBlanc N."/>
            <person name="Resto M."/>
            <person name="Gerratana B."/>
        </authorList>
    </citation>
    <scope>X-RAY CRYSTALLOGRAPHY (2.35 ANGSTROMS) IN COMPLEX WITH DEAMIDO-NAD</scope>
    <scope>FUNCTION</scope>
    <scope>CATALYTIC ACTIVITY</scope>
    <scope>BIOPHYSICOCHEMICAL PROPERTIES</scope>
    <scope>PATHWAY</scope>
    <scope>SUBUNIT</scope>
    <scope>DOMAIN</scope>
    <scope>ACTIVE SITE</scope>
    <scope>MUTAGENESIS OF ASP-656</scope>
</reference>
<reference evidence="14 15 16 17 18" key="6">
    <citation type="journal article" date="2012" name="Biochem. J.">
        <title>Regulation of the intersubunit ammonia tunnel in Mycobacterium tuberculosis glutamine-dependent NAD+ synthetase.</title>
        <authorList>
            <person name="Chuenchor W."/>
            <person name="Doukov T.I."/>
            <person name="Resto M."/>
            <person name="Chang A."/>
            <person name="Gerratana B."/>
        </authorList>
    </citation>
    <scope>X-RAY CRYSTALLOGRAPHY (2.00 ANGSTROMS) IN COMPLEX WITH AMP; ATP; L-GLUTAMIC ACID; NAD; DEAMIDO-NAD AND DIPHOSPHATE</scope>
    <scope>ACTIVITY REGULATION</scope>
    <scope>SUBUNIT</scope>
    <scope>DOMAIN</scope>
</reference>
<keyword id="KW-0002">3D-structure</keyword>
<keyword id="KW-0067">ATP-binding</keyword>
<keyword id="KW-0436">Ligase</keyword>
<keyword id="KW-0520">NAD</keyword>
<keyword id="KW-0547">Nucleotide-binding</keyword>
<keyword id="KW-1185">Reference proteome</keyword>
<name>NADE_MYCTU</name>
<sequence length="679" mass="74683">MNFYSAYQHGFVRVAACTHHTTIGDPAANAASVLDMARACHDDGAALAVFPELTLSGYSIEDVLLQDSLLDAVEDALLDLVTESADLLPVLVVGAPLRHRHRIYNTAVVIHRGAVLGVVPKSYLPTYREFYERRQMAPGDGERGTIRIGGADVAFGTDLLFAASDLPGFVLHVEICEDMFVPMPPSAEAALAGATVLANLSGSPITIGRAEDRRLLARSASARCLAAYVYAAAGEGESTTDLAWDGQTMIWENGALLAESERFPKGVRRSVADVDTELLRSERLRMGTFDDNRRHHRELTESFRRIDFALDPPAGDIGLLREVERFPFVPADPQRLQQDCYEAYNIQVSGLEQRLRALDYPKVVIGVSGGLDSTHALIVATHAMDREGRPRSDILAFALPGFATGEHTKNNAIKLARALGVTFSEIDIGDTARLMLHTIGHPYSVGEKVYDVTFENVQAGLRTDYLFRIANQRGGIVLGTGDLSELALGWSTYGVGDQMSHYNVNAGVPKTLIQHLIRWVISAGEFGEKVGEVLQSVLDTEITPELIPTGEEELQSSEAKVGPFALQDFSLFQVLRYGFRPSKIAFLAWHAWNDAERGNWPPGFPKSERPSYSLAEIRHWLQIFVQRFYSFSQFKRSALPNGPKVSHGGALSPRGDWRAPSDMSARIWLDQIDREVPKG</sequence>
<proteinExistence type="evidence at protein level"/>
<dbReference type="EC" id="6.3.5.1" evidence="1 4 5 7"/>
<dbReference type="EMBL" id="AL123456">
    <property type="protein sequence ID" value="CCP45230.1"/>
    <property type="molecule type" value="Genomic_DNA"/>
</dbReference>
<dbReference type="PIR" id="D70680">
    <property type="entry name" value="D70680"/>
</dbReference>
<dbReference type="RefSeq" id="NP_216954.2">
    <property type="nucleotide sequence ID" value="NC_000962.3"/>
</dbReference>
<dbReference type="RefSeq" id="WP_003901403.1">
    <property type="nucleotide sequence ID" value="NC_000962.3"/>
</dbReference>
<dbReference type="PDB" id="3DLA">
    <property type="method" value="X-ray"/>
    <property type="resolution" value="2.35 A"/>
    <property type="chains" value="A/B/C/D=1-679"/>
</dbReference>
<dbReference type="PDB" id="3SDB">
    <property type="method" value="X-ray"/>
    <property type="resolution" value="2.00 A"/>
    <property type="chains" value="A=1-679"/>
</dbReference>
<dbReference type="PDB" id="3SEQ">
    <property type="method" value="X-ray"/>
    <property type="resolution" value="2.73 A"/>
    <property type="chains" value="A/B/C/D=1-679"/>
</dbReference>
<dbReference type="PDB" id="3SEZ">
    <property type="method" value="X-ray"/>
    <property type="resolution" value="2.65 A"/>
    <property type="chains" value="A/B/C/D=1-679"/>
</dbReference>
<dbReference type="PDB" id="3SYT">
    <property type="method" value="X-ray"/>
    <property type="resolution" value="2.65 A"/>
    <property type="chains" value="A/B/C/D=1-679"/>
</dbReference>
<dbReference type="PDB" id="3SZG">
    <property type="method" value="X-ray"/>
    <property type="resolution" value="2.25 A"/>
    <property type="chains" value="A/B/C/D=1-679"/>
</dbReference>
<dbReference type="PDB" id="6OFC">
    <property type="method" value="X-ray"/>
    <property type="resolution" value="3.14 A"/>
    <property type="chains" value="A/B/C/D=1-679"/>
</dbReference>
<dbReference type="PDBsum" id="3DLA"/>
<dbReference type="PDBsum" id="3SDB"/>
<dbReference type="PDBsum" id="3SEQ"/>
<dbReference type="PDBsum" id="3SEZ"/>
<dbReference type="PDBsum" id="3SYT"/>
<dbReference type="PDBsum" id="3SZG"/>
<dbReference type="PDBsum" id="6OFC"/>
<dbReference type="SMR" id="P9WJJ3"/>
<dbReference type="FunCoup" id="P9WJJ3">
    <property type="interactions" value="354"/>
</dbReference>
<dbReference type="STRING" id="83332.Rv2438c"/>
<dbReference type="PaxDb" id="83332-Rv2438c"/>
<dbReference type="DNASU" id="885808"/>
<dbReference type="GeneID" id="885808"/>
<dbReference type="KEGG" id="mtu:Rv2438c"/>
<dbReference type="KEGG" id="mtv:RVBD_2438c"/>
<dbReference type="TubercuList" id="Rv2438c"/>
<dbReference type="eggNOG" id="COG0171">
    <property type="taxonomic scope" value="Bacteria"/>
</dbReference>
<dbReference type="eggNOG" id="COG0388">
    <property type="taxonomic scope" value="Bacteria"/>
</dbReference>
<dbReference type="InParanoid" id="P9WJJ3"/>
<dbReference type="OrthoDB" id="9760188at2"/>
<dbReference type="PhylomeDB" id="P9WJJ3"/>
<dbReference type="BRENDA" id="6.3.5.1">
    <property type="organism ID" value="3445"/>
</dbReference>
<dbReference type="UniPathway" id="UPA00253">
    <property type="reaction ID" value="UER00334"/>
</dbReference>
<dbReference type="EvolutionaryTrace" id="P9WJJ3"/>
<dbReference type="Proteomes" id="UP000001584">
    <property type="component" value="Chromosome"/>
</dbReference>
<dbReference type="GO" id="GO:0005737">
    <property type="term" value="C:cytoplasm"/>
    <property type="evidence" value="ECO:0000318"/>
    <property type="project" value="GO_Central"/>
</dbReference>
<dbReference type="GO" id="GO:0009274">
    <property type="term" value="C:peptidoglycan-based cell wall"/>
    <property type="evidence" value="ECO:0007005"/>
    <property type="project" value="MTBBASE"/>
</dbReference>
<dbReference type="GO" id="GO:0005886">
    <property type="term" value="C:plasma membrane"/>
    <property type="evidence" value="ECO:0007005"/>
    <property type="project" value="MTBBASE"/>
</dbReference>
<dbReference type="GO" id="GO:0005524">
    <property type="term" value="F:ATP binding"/>
    <property type="evidence" value="ECO:0007669"/>
    <property type="project" value="UniProtKB-UniRule"/>
</dbReference>
<dbReference type="GO" id="GO:0004359">
    <property type="term" value="F:glutaminase activity"/>
    <property type="evidence" value="ECO:0007669"/>
    <property type="project" value="InterPro"/>
</dbReference>
<dbReference type="GO" id="GO:0042802">
    <property type="term" value="F:identical protein binding"/>
    <property type="evidence" value="ECO:0000353"/>
    <property type="project" value="IntAct"/>
</dbReference>
<dbReference type="GO" id="GO:0003952">
    <property type="term" value="F:NAD+ synthase (glutamine-hydrolyzing) activity"/>
    <property type="evidence" value="ECO:0000314"/>
    <property type="project" value="MTBBASE"/>
</dbReference>
<dbReference type="GO" id="GO:0008795">
    <property type="term" value="F:NAD+ synthase activity"/>
    <property type="evidence" value="ECO:0007669"/>
    <property type="project" value="UniProtKB-UniRule"/>
</dbReference>
<dbReference type="GO" id="GO:0009435">
    <property type="term" value="P:NAD biosynthetic process"/>
    <property type="evidence" value="ECO:0000314"/>
    <property type="project" value="MTBBASE"/>
</dbReference>
<dbReference type="CDD" id="cd07570">
    <property type="entry name" value="GAT_Gln-NAD-synth"/>
    <property type="match status" value="1"/>
</dbReference>
<dbReference type="CDD" id="cd00553">
    <property type="entry name" value="NAD_synthase"/>
    <property type="match status" value="1"/>
</dbReference>
<dbReference type="FunFam" id="1.10.10.1140:FF:000001">
    <property type="entry name" value="Glutamine-dependent NAD(+) synthetase"/>
    <property type="match status" value="1"/>
</dbReference>
<dbReference type="FunFam" id="3.40.50.620:FF:000155">
    <property type="entry name" value="Glutamine-dependent NAD(+) synthetase"/>
    <property type="match status" value="1"/>
</dbReference>
<dbReference type="FunFam" id="3.60.110.10:FF:000020">
    <property type="entry name" value="Glutamine-dependent NAD(+) synthetase"/>
    <property type="match status" value="1"/>
</dbReference>
<dbReference type="Gene3D" id="3.60.110.10">
    <property type="entry name" value="Carbon-nitrogen hydrolase"/>
    <property type="match status" value="1"/>
</dbReference>
<dbReference type="Gene3D" id="1.10.10.1140">
    <property type="entry name" value="Glutamine-dependent NAD+ synthetase, C-terminal domain"/>
    <property type="match status" value="1"/>
</dbReference>
<dbReference type="Gene3D" id="3.40.50.620">
    <property type="entry name" value="HUPs"/>
    <property type="match status" value="1"/>
</dbReference>
<dbReference type="HAMAP" id="MF_02090">
    <property type="entry name" value="NadE_glutamine_dep"/>
    <property type="match status" value="1"/>
</dbReference>
<dbReference type="InterPro" id="IPR003010">
    <property type="entry name" value="C-N_Hydrolase"/>
</dbReference>
<dbReference type="InterPro" id="IPR036526">
    <property type="entry name" value="C-N_Hydrolase_sf"/>
</dbReference>
<dbReference type="InterPro" id="IPR014445">
    <property type="entry name" value="Gln-dep_NAD_synthase"/>
</dbReference>
<dbReference type="InterPro" id="IPR041856">
    <property type="entry name" value="NAD+_synth_C"/>
</dbReference>
<dbReference type="InterPro" id="IPR022310">
    <property type="entry name" value="NAD/GMP_synthase"/>
</dbReference>
<dbReference type="InterPro" id="IPR003694">
    <property type="entry name" value="NAD_synthase"/>
</dbReference>
<dbReference type="InterPro" id="IPR014729">
    <property type="entry name" value="Rossmann-like_a/b/a_fold"/>
</dbReference>
<dbReference type="NCBIfam" id="NF002730">
    <property type="entry name" value="PRK02628.1"/>
    <property type="match status" value="1"/>
</dbReference>
<dbReference type="PANTHER" id="PTHR23090:SF9">
    <property type="entry name" value="GLUTAMINE-DEPENDENT NAD(+) SYNTHETASE"/>
    <property type="match status" value="1"/>
</dbReference>
<dbReference type="PANTHER" id="PTHR23090">
    <property type="entry name" value="NH 3 /GLUTAMINE-DEPENDENT NAD + SYNTHETASE"/>
    <property type="match status" value="1"/>
</dbReference>
<dbReference type="Pfam" id="PF00795">
    <property type="entry name" value="CN_hydrolase"/>
    <property type="match status" value="1"/>
</dbReference>
<dbReference type="Pfam" id="PF02540">
    <property type="entry name" value="NAD_synthase"/>
    <property type="match status" value="1"/>
</dbReference>
<dbReference type="PIRSF" id="PIRSF006630">
    <property type="entry name" value="NADS_GAT"/>
    <property type="match status" value="1"/>
</dbReference>
<dbReference type="SUPFAM" id="SSF52402">
    <property type="entry name" value="Adenine nucleotide alpha hydrolases-like"/>
    <property type="match status" value="1"/>
</dbReference>
<dbReference type="SUPFAM" id="SSF56317">
    <property type="entry name" value="Carbon-nitrogen hydrolase"/>
    <property type="match status" value="1"/>
</dbReference>
<dbReference type="PROSITE" id="PS50263">
    <property type="entry name" value="CN_HYDROLASE"/>
    <property type="match status" value="1"/>
</dbReference>
<comment type="function">
    <text evidence="4 5 7">Catalyzes the ATP-dependent amidation of deamido-NAD to form NAD. Uses L-glutamine as a nitrogen source. In vitro, can also use ammonia with comparable specific activity.</text>
</comment>
<comment type="catalytic activity">
    <reaction evidence="1 4 5 7">
        <text>deamido-NAD(+) + L-glutamine + ATP + H2O = L-glutamate + AMP + diphosphate + NAD(+) + H(+)</text>
        <dbReference type="Rhea" id="RHEA:24384"/>
        <dbReference type="ChEBI" id="CHEBI:15377"/>
        <dbReference type="ChEBI" id="CHEBI:15378"/>
        <dbReference type="ChEBI" id="CHEBI:29985"/>
        <dbReference type="ChEBI" id="CHEBI:30616"/>
        <dbReference type="ChEBI" id="CHEBI:33019"/>
        <dbReference type="ChEBI" id="CHEBI:57540"/>
        <dbReference type="ChEBI" id="CHEBI:58359"/>
        <dbReference type="ChEBI" id="CHEBI:58437"/>
        <dbReference type="ChEBI" id="CHEBI:456215"/>
        <dbReference type="EC" id="6.3.5.1"/>
    </reaction>
</comment>
<comment type="activity regulation">
    <text evidence="6">The formation of the intermediates complex at the synthetase domain stimulates the glutaminase activity.</text>
</comment>
<comment type="biophysicochemical properties">
    <kinetics>
        <KM evidence="5">1.3 mM for glutamine</KM>
        <KM evidence="5">0.13 mM for deamido-NAD(+) (with glutamine as a nitrogen source)</KM>
        <KM evidence="5">0.12 mM for ATP (with glutamine as a nitrogen source)</KM>
        <KM evidence="5">20 mM for ammonia</KM>
        <KM evidence="5">0.7 mM for deamido-NAD(+) (with ammonia as a nitrogen source)</KM>
        <KM evidence="5">1.4 mM for ATP (with ammonia as a nitrogen source)</KM>
        <text evidence="5">kcat is 0.55 sec(-1) for glutamine-dependent activity. kcat is 2.8 sec(-1) for ammonia-dependent activity.</text>
    </kinetics>
</comment>
<comment type="pathway">
    <text evidence="1 12">Cofactor biosynthesis; NAD(+) biosynthesis; NAD(+) from deamido-NAD(+) (L-Gln route): step 1/1.</text>
</comment>
<comment type="subunit">
    <text evidence="5 6">Homooctamer; composed of two stacked homotetramers that form a ring-like structure.</text>
</comment>
<comment type="interaction">
    <interactant intactId="EBI-15763158">
        <id>P9WJJ3</id>
    </interactant>
    <interactant intactId="EBI-15763158">
        <id>P9WJJ3</id>
        <label>nadE</label>
    </interactant>
    <organismsDiffer>false</organismsDiffer>
    <experiments>2</experiments>
</comment>
<comment type="domain">
    <text evidence="5 6">An ammonia tunnel 40 Angstroms long allows transfer of ammonia from the glutaminase active site, where it is produced, to the synthetase active site, where it is used for the ATP-dependent formation of NAD(+).</text>
</comment>
<comment type="similarity">
    <text evidence="1 10">In the C-terminal section; belongs to the NAD synthetase family.</text>
</comment>
<gene>
    <name evidence="1" type="primary">nadE</name>
    <name type="ordered locus">Rv2438c</name>
    <name type="ORF">MTCY428.08</name>
</gene>
<evidence type="ECO:0000255" key="1">
    <source>
        <dbReference type="HAMAP-Rule" id="MF_02090"/>
    </source>
</evidence>
<evidence type="ECO:0000255" key="2">
    <source>
        <dbReference type="PROSITE-ProRule" id="PRU00054"/>
    </source>
</evidence>
<evidence type="ECO:0000256" key="3">
    <source>
        <dbReference type="SAM" id="MobiDB-lite"/>
    </source>
</evidence>
<evidence type="ECO:0000269" key="4">
    <source>
    </source>
</evidence>
<evidence type="ECO:0000269" key="5">
    <source>
    </source>
</evidence>
<evidence type="ECO:0000269" key="6">
    <source>
    </source>
</evidence>
<evidence type="ECO:0000269" key="7">
    <source>
    </source>
</evidence>
<evidence type="ECO:0000303" key="8">
    <source>
    </source>
</evidence>
<evidence type="ECO:0000303" key="9">
    <source>
    </source>
</evidence>
<evidence type="ECO:0000305" key="10"/>
<evidence type="ECO:0000305" key="11">
    <source>
    </source>
</evidence>
<evidence type="ECO:0000305" key="12">
    <source>
    </source>
</evidence>
<evidence type="ECO:0007744" key="13">
    <source>
        <dbReference type="PDB" id="3DLA"/>
    </source>
</evidence>
<evidence type="ECO:0007744" key="14">
    <source>
        <dbReference type="PDB" id="3SDB"/>
    </source>
</evidence>
<evidence type="ECO:0007744" key="15">
    <source>
        <dbReference type="PDB" id="3SEQ"/>
    </source>
</evidence>
<evidence type="ECO:0007744" key="16">
    <source>
        <dbReference type="PDB" id="3SEZ"/>
    </source>
</evidence>
<evidence type="ECO:0007744" key="17">
    <source>
        <dbReference type="PDB" id="3SYT"/>
    </source>
</evidence>
<evidence type="ECO:0007744" key="18">
    <source>
        <dbReference type="PDB" id="3SZG"/>
    </source>
</evidence>
<evidence type="ECO:0007829" key="19">
    <source>
        <dbReference type="PDB" id="3SDB"/>
    </source>
</evidence>
<evidence type="ECO:0007829" key="20">
    <source>
        <dbReference type="PDB" id="3SEQ"/>
    </source>
</evidence>
<evidence type="ECO:0007829" key="21">
    <source>
        <dbReference type="PDB" id="3SYT"/>
    </source>
</evidence>
<evidence type="ECO:0007829" key="22">
    <source>
        <dbReference type="PDB" id="3SZG"/>
    </source>
</evidence>
<evidence type="ECO:0007829" key="23">
    <source>
        <dbReference type="PDB" id="6OFC"/>
    </source>
</evidence>
<protein>
    <recommendedName>
        <fullName evidence="1 8 9">Glutamine-dependent NAD(+) synthetase</fullName>
        <ecNumber evidence="1 4 5 7">6.3.5.1</ecNumber>
    </recommendedName>
    <alternativeName>
        <fullName evidence="1">NAD(+) synthase [glutamine-hydrolyzing]</fullName>
    </alternativeName>
</protein>
<organism>
    <name type="scientific">Mycobacterium tuberculosis (strain ATCC 25618 / H37Rv)</name>
    <dbReference type="NCBI Taxonomy" id="83332"/>
    <lineage>
        <taxon>Bacteria</taxon>
        <taxon>Bacillati</taxon>
        <taxon>Actinomycetota</taxon>
        <taxon>Actinomycetes</taxon>
        <taxon>Mycobacteriales</taxon>
        <taxon>Mycobacteriaceae</taxon>
        <taxon>Mycobacterium</taxon>
        <taxon>Mycobacterium tuberculosis complex</taxon>
    </lineage>
</organism>
<accession>P9WJJ3</accession>
<accession>L0T9M3</accession>
<accession>P0A5L6</accession>
<accession>P71911</accession>